<sequence>MKGTLTRAALAAGGMMVTSAVMAGSLALPTAQSLAGQWEVADSERQCQIEFLANEQSETNGYQLVDRQRCLQSVFAAEVVAGAGPDGIALLQADGSTLAFFSRDGDLYRNQLGAGDALTLKALA</sequence>
<dbReference type="EMBL" id="L09107">
    <property type="protein sequence ID" value="AAA92336.1"/>
    <property type="molecule type" value="Genomic_DNA"/>
</dbReference>
<dbReference type="PIR" id="S55042">
    <property type="entry name" value="S55042"/>
</dbReference>
<dbReference type="SMR" id="Q54478"/>
<dbReference type="STRING" id="273526.SMDB11_4312"/>
<dbReference type="MEROPS" id="I38.003"/>
<dbReference type="GO" id="GO:0042597">
    <property type="term" value="C:periplasmic space"/>
    <property type="evidence" value="ECO:0007669"/>
    <property type="project" value="UniProtKB-SubCell"/>
</dbReference>
<dbReference type="GO" id="GO:0008191">
    <property type="term" value="F:metalloendopeptidase inhibitor activity"/>
    <property type="evidence" value="ECO:0007669"/>
    <property type="project" value="InterPro"/>
</dbReference>
<dbReference type="Gene3D" id="2.40.128.10">
    <property type="match status" value="1"/>
</dbReference>
<dbReference type="InterPro" id="IPR022815">
    <property type="entry name" value="Inh"/>
</dbReference>
<dbReference type="InterPro" id="IPR021140">
    <property type="entry name" value="Inh/Omp19"/>
</dbReference>
<dbReference type="InterPro" id="IPR016085">
    <property type="entry name" value="Protease_inh_b-brl_dom"/>
</dbReference>
<dbReference type="Pfam" id="PF02974">
    <property type="entry name" value="Inh"/>
    <property type="match status" value="1"/>
</dbReference>
<dbReference type="PRINTS" id="PR01274">
    <property type="entry name" value="MPTASEINHBTR"/>
</dbReference>
<dbReference type="SUPFAM" id="SSF50882">
    <property type="entry name" value="beta-Barrel protease inhibitors"/>
    <property type="match status" value="1"/>
</dbReference>
<organism>
    <name type="scientific">Serratia marcescens</name>
    <dbReference type="NCBI Taxonomy" id="615"/>
    <lineage>
        <taxon>Bacteria</taxon>
        <taxon>Pseudomonadati</taxon>
        <taxon>Pseudomonadota</taxon>
        <taxon>Gammaproteobacteria</taxon>
        <taxon>Enterobacterales</taxon>
        <taxon>Yersiniaceae</taxon>
        <taxon>Serratia</taxon>
    </lineage>
</organism>
<gene>
    <name type="primary">inh</name>
</gene>
<protein>
    <recommendedName>
        <fullName>Alkaline proteinase inhibitor</fullName>
    </recommendedName>
    <alternativeName>
        <fullName>11 kDa protease inhibitor</fullName>
    </alternativeName>
    <alternativeName>
        <fullName>SmaPI</fullName>
    </alternativeName>
</protein>
<name>INH_SERMA</name>
<proteinExistence type="evidence at protein level"/>
<accession>Q54478</accession>
<feature type="signal peptide" evidence="2">
    <location>
        <begin position="1"/>
        <end position="24"/>
    </location>
</feature>
<feature type="chain" id="PRO_0000026721" description="Alkaline proteinase inhibitor">
    <location>
        <begin position="25"/>
        <end position="124"/>
    </location>
</feature>
<feature type="disulfide bond" evidence="1">
    <location>
        <begin position="47"/>
        <end position="70"/>
    </location>
</feature>
<reference key="1">
    <citation type="journal article" date="1995" name="Appl. Environ. Microbiol.">
        <title>Characterization of a metalloprotease inhibitor protein (SmaPI) of Serratia marcescens.</title>
        <authorList>
            <person name="Kim K.S."/>
            <person name="Kim T.U."/>
            <person name="Kim I.J."/>
            <person name="Byun S.M."/>
            <person name="Shin Y.C."/>
        </authorList>
    </citation>
    <scope>NUCLEOTIDE SEQUENCE [GENOMIC DNA]</scope>
    <scope>CHARACTERIZATION</scope>
    <source>
        <strain>ATCC 27117 / D 217</strain>
    </source>
</reference>
<comment type="function">
    <text>Inhibitor of the alkaline protease. Inhibits SMP by formation of a non-covalent complex with a molar ratio of 1:1 and shows a high specificity.</text>
</comment>
<comment type="subunit">
    <text>Monomer.</text>
</comment>
<comment type="subcellular location">
    <subcellularLocation>
        <location evidence="1">Periplasm</location>
    </subcellularLocation>
</comment>
<comment type="similarity">
    <text evidence="3">Belongs to the protease inhibitor I38 family.</text>
</comment>
<evidence type="ECO:0000250" key="1"/>
<evidence type="ECO:0000255" key="2"/>
<evidence type="ECO:0000305" key="3"/>
<keyword id="KW-1015">Disulfide bond</keyword>
<keyword id="KW-0481">Metalloenzyme inhibitor</keyword>
<keyword id="KW-0483">Metalloprotease inhibitor</keyword>
<keyword id="KW-0574">Periplasm</keyword>
<keyword id="KW-0646">Protease inhibitor</keyword>
<keyword id="KW-0732">Signal</keyword>